<protein>
    <recommendedName>
        <fullName evidence="1">UPF0246 protein BPP3440</fullName>
    </recommendedName>
</protein>
<feature type="chain" id="PRO_0000203976" description="UPF0246 protein BPP3440">
    <location>
        <begin position="1"/>
        <end position="257"/>
    </location>
</feature>
<dbReference type="EMBL" id="BX640433">
    <property type="protein sequence ID" value="CAE38725.1"/>
    <property type="molecule type" value="Genomic_DNA"/>
</dbReference>
<dbReference type="SMR" id="Q7W561"/>
<dbReference type="KEGG" id="bpa:BPP3440"/>
<dbReference type="HOGENOM" id="CLU_061989_0_0_4"/>
<dbReference type="Proteomes" id="UP000001421">
    <property type="component" value="Chromosome"/>
</dbReference>
<dbReference type="GO" id="GO:0005829">
    <property type="term" value="C:cytosol"/>
    <property type="evidence" value="ECO:0007669"/>
    <property type="project" value="TreeGrafter"/>
</dbReference>
<dbReference type="GO" id="GO:0033194">
    <property type="term" value="P:response to hydroperoxide"/>
    <property type="evidence" value="ECO:0007669"/>
    <property type="project" value="TreeGrafter"/>
</dbReference>
<dbReference type="HAMAP" id="MF_00652">
    <property type="entry name" value="UPF0246"/>
    <property type="match status" value="1"/>
</dbReference>
<dbReference type="InterPro" id="IPR005583">
    <property type="entry name" value="YaaA"/>
</dbReference>
<dbReference type="NCBIfam" id="NF002542">
    <property type="entry name" value="PRK02101.1-3"/>
    <property type="match status" value="1"/>
</dbReference>
<dbReference type="PANTHER" id="PTHR30283:SF4">
    <property type="entry name" value="PEROXIDE STRESS RESISTANCE PROTEIN YAAA"/>
    <property type="match status" value="1"/>
</dbReference>
<dbReference type="PANTHER" id="PTHR30283">
    <property type="entry name" value="PEROXIDE STRESS RESPONSE PROTEIN YAAA"/>
    <property type="match status" value="1"/>
</dbReference>
<dbReference type="Pfam" id="PF03883">
    <property type="entry name" value="H2O2_YaaD"/>
    <property type="match status" value="1"/>
</dbReference>
<sequence length="257" mass="28650">MLFLLSPAKKLDYDSPVHVETHTQPLFVDQAAALIKVLKTKSADEIAELMSLSPALAELNAGRYGAWKRSFTQANSRQAVLAFNGDVYEGLQADTLSARQLDWAQDHVVILSGLYGALRPLDLMQPYRLEMGTRLHTPKGKNLYEYWGSGIAEYLNERQAGAKAPVIVNLASEEYFKVVDLKTLKARVVQCVFQDWKNGAWKVISFHAKRARGLMARYAIAHKVARPEGLQGFDSEGYAYDAAASSADKLVFRRKQA</sequence>
<comment type="similarity">
    <text evidence="1">Belongs to the UPF0246 family.</text>
</comment>
<proteinExistence type="inferred from homology"/>
<reference key="1">
    <citation type="journal article" date="2003" name="Nat. Genet.">
        <title>Comparative analysis of the genome sequences of Bordetella pertussis, Bordetella parapertussis and Bordetella bronchiseptica.</title>
        <authorList>
            <person name="Parkhill J."/>
            <person name="Sebaihia M."/>
            <person name="Preston A."/>
            <person name="Murphy L.D."/>
            <person name="Thomson N.R."/>
            <person name="Harris D.E."/>
            <person name="Holden M.T.G."/>
            <person name="Churcher C.M."/>
            <person name="Bentley S.D."/>
            <person name="Mungall K.L."/>
            <person name="Cerdeno-Tarraga A.-M."/>
            <person name="Temple L."/>
            <person name="James K.D."/>
            <person name="Harris B."/>
            <person name="Quail M.A."/>
            <person name="Achtman M."/>
            <person name="Atkin R."/>
            <person name="Baker S."/>
            <person name="Basham D."/>
            <person name="Bason N."/>
            <person name="Cherevach I."/>
            <person name="Chillingworth T."/>
            <person name="Collins M."/>
            <person name="Cronin A."/>
            <person name="Davis P."/>
            <person name="Doggett J."/>
            <person name="Feltwell T."/>
            <person name="Goble A."/>
            <person name="Hamlin N."/>
            <person name="Hauser H."/>
            <person name="Holroyd S."/>
            <person name="Jagels K."/>
            <person name="Leather S."/>
            <person name="Moule S."/>
            <person name="Norberczak H."/>
            <person name="O'Neil S."/>
            <person name="Ormond D."/>
            <person name="Price C."/>
            <person name="Rabbinowitsch E."/>
            <person name="Rutter S."/>
            <person name="Sanders M."/>
            <person name="Saunders D."/>
            <person name="Seeger K."/>
            <person name="Sharp S."/>
            <person name="Simmonds M."/>
            <person name="Skelton J."/>
            <person name="Squares R."/>
            <person name="Squares S."/>
            <person name="Stevens K."/>
            <person name="Unwin L."/>
            <person name="Whitehead S."/>
            <person name="Barrell B.G."/>
            <person name="Maskell D.J."/>
        </authorList>
    </citation>
    <scope>NUCLEOTIDE SEQUENCE [LARGE SCALE GENOMIC DNA]</scope>
    <source>
        <strain>12822 / ATCC BAA-587 / NCTC 13253</strain>
    </source>
</reference>
<name>Y3440_BORPA</name>
<organism>
    <name type="scientific">Bordetella parapertussis (strain 12822 / ATCC BAA-587 / NCTC 13253)</name>
    <dbReference type="NCBI Taxonomy" id="257311"/>
    <lineage>
        <taxon>Bacteria</taxon>
        <taxon>Pseudomonadati</taxon>
        <taxon>Pseudomonadota</taxon>
        <taxon>Betaproteobacteria</taxon>
        <taxon>Burkholderiales</taxon>
        <taxon>Alcaligenaceae</taxon>
        <taxon>Bordetella</taxon>
    </lineage>
</organism>
<gene>
    <name type="ordered locus">BPP3440</name>
</gene>
<accession>Q7W561</accession>
<evidence type="ECO:0000255" key="1">
    <source>
        <dbReference type="HAMAP-Rule" id="MF_00652"/>
    </source>
</evidence>